<sequence>MKFETTKNKLHGNAYYQAQFQDPIKFTTGSATPASYNQFIDALRERLTGGLIYGIPVLRDPSTVEKPNQYVTVELSYSDTVSIQLGIDLTNAYVVAYRAGSESFFFRNAPASASTYLFTGTQQYSLPFDGNYDDLEKWAHQSRQRISLGLEALRQGIKFLRSGASDDEEIARTLIVIIQMVAEAARFRYVSKLVVISLSNRAAFQPDPSMLSLENTWEPLSRAVQHTVQDTFPQNVTLINVRQERVVVSSLSHPSVSALALMLFVCNPLNATQSPLLIRSVVEQSKICSSHYEPTVRIGGRDGLCVDVSDNAYNNGNPIILWKCKDQLEVNQLWTLKSDKTIRSKGKCLTTYGYAPGNYVMIYDCSSAVAEATYWDIWDNGTIINPKSGLVLSAESSSMGGTLTVQKNDYRMRQGWRTGNDTSPFVTSIAGFFKLCMEAHGNSMWLDVCDITKEEQQWAVYPDGSIRPVQNTNNCLTCEEHKQGATIVMMGCSNAWASQRWVFKSDGTIYNLYDDMVMDVKSSDPSLKQIILWPYTGNANQMWATLF</sequence>
<feature type="signal peptide" evidence="5">
    <location>
        <begin position="1"/>
        <end position="20"/>
    </location>
</feature>
<feature type="chain" id="PRO_0000248489" description="Agglutinin-1 chain A">
    <location>
        <begin position="21"/>
        <end position="278"/>
    </location>
</feature>
<feature type="propeptide" id="PRO_0000248490" description="Linker peptide" evidence="5">
    <location>
        <begin position="279"/>
        <end position="280"/>
    </location>
</feature>
<feature type="chain" id="PRO_0000248491" description="Agglutinin-1 chain B">
    <location>
        <begin position="281"/>
        <end position="547"/>
    </location>
</feature>
<feature type="domain" description="Ricin B-type lectin 1" evidence="4">
    <location>
        <begin position="292"/>
        <end position="419"/>
    </location>
</feature>
<feature type="repeat" description="1-alpha" evidence="3">
    <location>
        <begin position="302"/>
        <end position="344"/>
    </location>
</feature>
<feature type="repeat" description="1-beta" evidence="3">
    <location>
        <begin position="345"/>
        <end position="385"/>
    </location>
</feature>
<feature type="repeat" description="1-gamma" evidence="3">
    <location>
        <begin position="388"/>
        <end position="420"/>
    </location>
</feature>
<feature type="domain" description="Ricin B-type lectin 2" evidence="4">
    <location>
        <begin position="422"/>
        <end position="546"/>
    </location>
</feature>
<feature type="repeat" description="2-alpha" evidence="3">
    <location>
        <begin position="433"/>
        <end position="468"/>
    </location>
</feature>
<feature type="repeat" description="2-beta" evidence="3">
    <location>
        <begin position="472"/>
        <end position="511"/>
    </location>
</feature>
<feature type="repeat" description="2-gamma" evidence="3">
    <location>
        <begin position="514"/>
        <end position="547"/>
    </location>
</feature>
<feature type="active site" evidence="1">
    <location>
        <position position="183"/>
    </location>
</feature>
<feature type="modified residue" description="Pyrrolidone carboxylic acid" evidence="2">
    <location>
        <position position="21"/>
    </location>
</feature>
<feature type="glycosylation site" description="N-linked (GlcNAc...) asparagine" evidence="3">
    <location>
        <position position="380"/>
    </location>
</feature>
<feature type="glycosylation site" description="N-linked (GlcNAc...) asparagine" evidence="3">
    <location>
        <position position="420"/>
    </location>
</feature>
<feature type="disulfide bond" description="Interchain (between A and B chains)" evidence="1 4">
    <location>
        <begin position="266"/>
        <end position="288"/>
    </location>
</feature>
<feature type="disulfide bond" evidence="1 4">
    <location>
        <begin position="305"/>
        <end position="324"/>
    </location>
</feature>
<feature type="disulfide bond" evidence="1 4">
    <location>
        <begin position="348"/>
        <end position="365"/>
    </location>
</feature>
<feature type="disulfide bond" evidence="1 4">
    <location>
        <begin position="436"/>
        <end position="449"/>
    </location>
</feature>
<feature type="disulfide bond" evidence="1 4">
    <location>
        <begin position="475"/>
        <end position="492"/>
    </location>
</feature>
<feature type="mutagenesis site" description="7-fold more potent in protein synthesis inhibition in vitro." evidence="5">
    <original>P</original>
    <variation>N</variation>
    <location>
        <position position="219"/>
    </location>
</feature>
<feature type="strand" evidence="11">
    <location>
        <begin position="25"/>
        <end position="27"/>
    </location>
</feature>
<feature type="helix" evidence="11">
    <location>
        <begin position="28"/>
        <end position="30"/>
    </location>
</feature>
<feature type="helix" evidence="11">
    <location>
        <begin position="33"/>
        <end position="47"/>
    </location>
</feature>
<feature type="strand" evidence="11">
    <location>
        <begin position="48"/>
        <end position="52"/>
    </location>
</feature>
<feature type="strand" evidence="11">
    <location>
        <begin position="55"/>
        <end position="58"/>
    </location>
</feature>
<feature type="helix" evidence="11">
    <location>
        <begin position="61"/>
        <end position="63"/>
    </location>
</feature>
<feature type="helix" evidence="11">
    <location>
        <begin position="66"/>
        <end position="68"/>
    </location>
</feature>
<feature type="strand" evidence="11">
    <location>
        <begin position="69"/>
        <end position="78"/>
    </location>
</feature>
<feature type="strand" evidence="11">
    <location>
        <begin position="81"/>
        <end position="88"/>
    </location>
</feature>
<feature type="turn" evidence="11">
    <location>
        <begin position="89"/>
        <end position="91"/>
    </location>
</feature>
<feature type="strand" evidence="11">
    <location>
        <begin position="94"/>
        <end position="99"/>
    </location>
</feature>
<feature type="strand" evidence="11">
    <location>
        <begin position="102"/>
        <end position="105"/>
    </location>
</feature>
<feature type="helix" evidence="11">
    <location>
        <begin position="111"/>
        <end position="116"/>
    </location>
</feature>
<feature type="strand" evidence="11">
    <location>
        <begin position="121"/>
        <end position="125"/>
    </location>
</feature>
<feature type="helix" evidence="11">
    <location>
        <begin position="132"/>
        <end position="139"/>
    </location>
</feature>
<feature type="helix" evidence="11">
    <location>
        <begin position="143"/>
        <end position="145"/>
    </location>
</feature>
<feature type="helix" evidence="11">
    <location>
        <begin position="150"/>
        <end position="161"/>
    </location>
</feature>
<feature type="helix" evidence="11">
    <location>
        <begin position="167"/>
        <end position="186"/>
    </location>
</feature>
<feature type="helix" evidence="11">
    <location>
        <begin position="188"/>
        <end position="200"/>
    </location>
</feature>
<feature type="helix" evidence="11">
    <location>
        <begin position="208"/>
        <end position="226"/>
    </location>
</feature>
<feature type="strand" evidence="10">
    <location>
        <begin position="228"/>
        <end position="230"/>
    </location>
</feature>
<feature type="strand" evidence="11">
    <location>
        <begin position="231"/>
        <end position="239"/>
    </location>
</feature>
<feature type="strand" evidence="11">
    <location>
        <begin position="245"/>
        <end position="250"/>
    </location>
</feature>
<feature type="helix" evidence="11">
    <location>
        <begin position="254"/>
        <end position="258"/>
    </location>
</feature>
<feature type="helix" evidence="11">
    <location>
        <begin position="301"/>
        <end position="303"/>
    </location>
</feature>
<feature type="strand" evidence="11">
    <location>
        <begin position="305"/>
        <end position="308"/>
    </location>
</feature>
<feature type="helix" evidence="11">
    <location>
        <begin position="309"/>
        <end position="311"/>
    </location>
</feature>
<feature type="strand" evidence="11">
    <location>
        <begin position="318"/>
        <end position="322"/>
    </location>
</feature>
<feature type="helix" evidence="11">
    <location>
        <begin position="330"/>
        <end position="332"/>
    </location>
</feature>
<feature type="strand" evidence="11">
    <location>
        <begin position="334"/>
        <end position="336"/>
    </location>
</feature>
<feature type="strand" evidence="11">
    <location>
        <begin position="342"/>
        <end position="344"/>
    </location>
</feature>
<feature type="strand" evidence="11">
    <location>
        <begin position="347"/>
        <end position="352"/>
    </location>
</feature>
<feature type="strand" evidence="11">
    <location>
        <begin position="359"/>
        <end position="363"/>
    </location>
</feature>
<feature type="turn" evidence="11">
    <location>
        <begin position="365"/>
        <end position="367"/>
    </location>
</feature>
<feature type="helix" evidence="11">
    <location>
        <begin position="370"/>
        <end position="373"/>
    </location>
</feature>
<feature type="strand" evidence="11">
    <location>
        <begin position="383"/>
        <end position="385"/>
    </location>
</feature>
<feature type="turn" evidence="11">
    <location>
        <begin position="386"/>
        <end position="389"/>
    </location>
</feature>
<feature type="strand" evidence="11">
    <location>
        <begin position="390"/>
        <end position="393"/>
    </location>
</feature>
<feature type="strand" evidence="11">
    <location>
        <begin position="404"/>
        <end position="406"/>
    </location>
</feature>
<feature type="helix" evidence="11">
    <location>
        <begin position="412"/>
        <end position="414"/>
    </location>
</feature>
<feature type="strand" evidence="11">
    <location>
        <begin position="417"/>
        <end position="420"/>
    </location>
</feature>
<feature type="strand" evidence="11">
    <location>
        <begin position="425"/>
        <end position="430"/>
    </location>
</feature>
<feature type="strand" evidence="11">
    <location>
        <begin position="435"/>
        <end position="440"/>
    </location>
</feature>
<feature type="strand" evidence="11">
    <location>
        <begin position="443"/>
        <end position="448"/>
    </location>
</feature>
<feature type="helix" evidence="11">
    <location>
        <begin position="454"/>
        <end position="456"/>
    </location>
</feature>
<feature type="strand" evidence="11">
    <location>
        <begin position="458"/>
        <end position="460"/>
    </location>
</feature>
<feature type="strand" evidence="11">
    <location>
        <begin position="466"/>
        <end position="468"/>
    </location>
</feature>
<feature type="strand" evidence="11">
    <location>
        <begin position="474"/>
        <end position="482"/>
    </location>
</feature>
<feature type="strand" evidence="11">
    <location>
        <begin position="486"/>
        <end position="491"/>
    </location>
</feature>
<feature type="helix" evidence="11">
    <location>
        <begin position="492"/>
        <end position="494"/>
    </location>
</feature>
<feature type="helix" evidence="11">
    <location>
        <begin position="497"/>
        <end position="499"/>
    </location>
</feature>
<feature type="strand" evidence="11">
    <location>
        <begin position="509"/>
        <end position="511"/>
    </location>
</feature>
<feature type="turn" evidence="11">
    <location>
        <begin position="512"/>
        <end position="515"/>
    </location>
</feature>
<feature type="strand" evidence="11">
    <location>
        <begin position="516"/>
        <end position="520"/>
    </location>
</feature>
<feature type="helix" evidence="11">
    <location>
        <begin position="521"/>
        <end position="523"/>
    </location>
</feature>
<feature type="helix" evidence="11">
    <location>
        <begin position="525"/>
        <end position="527"/>
    </location>
</feature>
<feature type="strand" evidence="11">
    <location>
        <begin position="530"/>
        <end position="533"/>
    </location>
</feature>
<feature type="helix" evidence="11">
    <location>
        <begin position="539"/>
        <end position="541"/>
    </location>
</feature>
<feature type="strand" evidence="11">
    <location>
        <begin position="544"/>
        <end position="546"/>
    </location>
</feature>
<dbReference type="EC" id="3.2.2.22"/>
<dbReference type="EMBL" id="AF190173">
    <property type="protein sequence ID" value="AAF28309.1"/>
    <property type="molecule type" value="mRNA"/>
</dbReference>
<dbReference type="PDB" id="2Q3N">
    <property type="method" value="X-ray"/>
    <property type="resolution" value="3.50 A"/>
    <property type="chains" value="A=21-280, B=281-547"/>
</dbReference>
<dbReference type="PDB" id="2ZR1">
    <property type="method" value="X-ray"/>
    <property type="resolution" value="2.60 A"/>
    <property type="chains" value="A/C=21-278, B/D=281-547"/>
</dbReference>
<dbReference type="PDBsum" id="2Q3N"/>
<dbReference type="PDBsum" id="2ZR1"/>
<dbReference type="SMR" id="Q9M6E9"/>
<dbReference type="CAZy" id="CBM13">
    <property type="family name" value="Carbohydrate-Binding Module Family 13"/>
</dbReference>
<dbReference type="UniLectin" id="Q9M6E9"/>
<dbReference type="GlyCosmos" id="Q9M6E9">
    <property type="glycosylation" value="2 sites, No reported glycans"/>
</dbReference>
<dbReference type="EvolutionaryTrace" id="Q9M6E9"/>
<dbReference type="Proteomes" id="UP000694853">
    <property type="component" value="Unplaced"/>
</dbReference>
<dbReference type="GO" id="GO:0030246">
    <property type="term" value="F:carbohydrate binding"/>
    <property type="evidence" value="ECO:0000304"/>
    <property type="project" value="UniProtKB"/>
</dbReference>
<dbReference type="GO" id="GO:0030598">
    <property type="term" value="F:rRNA N-glycosylase activity"/>
    <property type="evidence" value="ECO:0000303"/>
    <property type="project" value="UniProtKB"/>
</dbReference>
<dbReference type="GO" id="GO:0090729">
    <property type="term" value="F:toxin activity"/>
    <property type="evidence" value="ECO:0007669"/>
    <property type="project" value="UniProtKB-KW"/>
</dbReference>
<dbReference type="GO" id="GO:0006952">
    <property type="term" value="P:defense response"/>
    <property type="evidence" value="ECO:0007669"/>
    <property type="project" value="UniProtKB-KW"/>
</dbReference>
<dbReference type="GO" id="GO:0007157">
    <property type="term" value="P:heterophilic cell-cell adhesion via plasma membrane cell adhesion molecules"/>
    <property type="evidence" value="ECO:0000303"/>
    <property type="project" value="UniProtKB"/>
</dbReference>
<dbReference type="GO" id="GO:0017148">
    <property type="term" value="P:negative regulation of translation"/>
    <property type="evidence" value="ECO:0000314"/>
    <property type="project" value="UniProtKB"/>
</dbReference>
<dbReference type="CDD" id="cd23484">
    <property type="entry name" value="beta-trefoil_Ricin_abrin-like_rpt1"/>
    <property type="match status" value="1"/>
</dbReference>
<dbReference type="CDD" id="cd23491">
    <property type="entry name" value="beta-trefoil_Ricin_abrin-like_rpt2"/>
    <property type="match status" value="1"/>
</dbReference>
<dbReference type="FunFam" id="2.80.10.50:FF:000076">
    <property type="entry name" value="Beta-galactoside-specific lectin 1"/>
    <property type="match status" value="1"/>
</dbReference>
<dbReference type="FunFam" id="2.80.10.50:FF:000079">
    <property type="entry name" value="Ricin"/>
    <property type="match status" value="1"/>
</dbReference>
<dbReference type="FunFam" id="3.40.420.10:FF:000001">
    <property type="entry name" value="Ricin"/>
    <property type="match status" value="1"/>
</dbReference>
<dbReference type="Gene3D" id="2.80.10.50">
    <property type="match status" value="2"/>
</dbReference>
<dbReference type="Gene3D" id="3.40.420.10">
    <property type="entry name" value="Ricin (A subunit), domain 1"/>
    <property type="match status" value="1"/>
</dbReference>
<dbReference type="Gene3D" id="4.10.470.10">
    <property type="entry name" value="Ricin (A Subunit), domain 2"/>
    <property type="match status" value="1"/>
</dbReference>
<dbReference type="InterPro" id="IPR036041">
    <property type="entry name" value="Ribosome-inact_prot_sf"/>
</dbReference>
<dbReference type="InterPro" id="IPR017989">
    <property type="entry name" value="Ribosome_inactivat_1/2"/>
</dbReference>
<dbReference type="InterPro" id="IPR001574">
    <property type="entry name" value="Ribosome_inactivat_prot"/>
</dbReference>
<dbReference type="InterPro" id="IPR017988">
    <property type="entry name" value="Ribosome_inactivat_prot_CS"/>
</dbReference>
<dbReference type="InterPro" id="IPR016138">
    <property type="entry name" value="Ribosome_inactivat_prot_sub1"/>
</dbReference>
<dbReference type="InterPro" id="IPR016139">
    <property type="entry name" value="Ribosome_inactivat_prot_sub2"/>
</dbReference>
<dbReference type="InterPro" id="IPR035992">
    <property type="entry name" value="Ricin_B-like_lectins"/>
</dbReference>
<dbReference type="InterPro" id="IPR000772">
    <property type="entry name" value="Ricin_B_lectin"/>
</dbReference>
<dbReference type="PANTHER" id="PTHR33453">
    <property type="match status" value="1"/>
</dbReference>
<dbReference type="PANTHER" id="PTHR33453:SF34">
    <property type="entry name" value="RIBOSOME-INACTIVATING PROTEIN"/>
    <property type="match status" value="1"/>
</dbReference>
<dbReference type="Pfam" id="PF00652">
    <property type="entry name" value="Ricin_B_lectin"/>
    <property type="match status" value="2"/>
</dbReference>
<dbReference type="Pfam" id="PF00161">
    <property type="entry name" value="RIP"/>
    <property type="match status" value="1"/>
</dbReference>
<dbReference type="PRINTS" id="PR00396">
    <property type="entry name" value="SHIGARICIN"/>
</dbReference>
<dbReference type="SMART" id="SM00458">
    <property type="entry name" value="RICIN"/>
    <property type="match status" value="2"/>
</dbReference>
<dbReference type="SUPFAM" id="SSF56371">
    <property type="entry name" value="Ribosome inactivating proteins (RIP)"/>
    <property type="match status" value="1"/>
</dbReference>
<dbReference type="SUPFAM" id="SSF50370">
    <property type="entry name" value="Ricin B-like lectins"/>
    <property type="match status" value="2"/>
</dbReference>
<dbReference type="PROSITE" id="PS50231">
    <property type="entry name" value="RICIN_B_LECTIN"/>
    <property type="match status" value="2"/>
</dbReference>
<dbReference type="PROSITE" id="PS00275">
    <property type="entry name" value="SHIGA_RICIN"/>
    <property type="match status" value="1"/>
</dbReference>
<protein>
    <recommendedName>
        <fullName>Agglutinin-1</fullName>
    </recommendedName>
    <alternativeName>
        <fullName>Agglutinin I</fullName>
    </alternativeName>
    <component>
        <recommendedName>
            <fullName>Agglutinin-1 chain A</fullName>
            <ecNumber>3.2.2.22</ecNumber>
        </recommendedName>
        <alternativeName>
            <fullName>AAG-A</fullName>
        </alternativeName>
    </component>
    <component>
        <recommendedName>
            <fullName>Agglutinin-1 chain B</fullName>
        </recommendedName>
        <alternativeName>
            <fullName>AAG-B</fullName>
        </alternativeName>
    </component>
</protein>
<gene>
    <name evidence="9" type="primary">AAG</name>
</gene>
<proteinExistence type="evidence at protein level"/>
<name>AGGL_ABRPR</name>
<comment type="function">
    <text evidence="2 5">The A chain is responsible for inhibiting protein synthesis through the catalytic inactivation of 60S ribosomal subunits by removing adenine from position 4,324 of 28S rRNA (By similarity). Less toxic than abrin-a.</text>
</comment>
<comment type="function">
    <text evidence="2">The B chain is a galactose-specific lectin that facilitates the binding to the cell membrane that precedes endocytosis.</text>
</comment>
<comment type="catalytic activity">
    <reaction evidence="1">
        <text>Endohydrolysis of the N-glycosidic bond at one specific adenosine on the 28S rRNA.</text>
        <dbReference type="EC" id="3.2.2.22"/>
    </reaction>
</comment>
<comment type="subunit">
    <text evidence="7">Heterotetramer of two A and two B chains.</text>
</comment>
<comment type="domain">
    <text evidence="3">The B chain is composed of two domains, each domain consists of 3 homologous subdomains (alpha, beta, gamma).</text>
</comment>
<comment type="miscellaneous">
    <text evidence="6">Induces cytokine production and proliferation of splenocytes and thymocytes in mice.</text>
</comment>
<comment type="similarity">
    <text evidence="3">In the N-terminal section; belongs to the ribosome-inactivating protein family. Type 2 RIP subfamily.</text>
</comment>
<organism>
    <name type="scientific">Abrus precatorius</name>
    <name type="common">Indian licorice</name>
    <name type="synonym">Glycine abrus</name>
    <dbReference type="NCBI Taxonomy" id="3816"/>
    <lineage>
        <taxon>Eukaryota</taxon>
        <taxon>Viridiplantae</taxon>
        <taxon>Streptophyta</taxon>
        <taxon>Embryophyta</taxon>
        <taxon>Tracheophyta</taxon>
        <taxon>Spermatophyta</taxon>
        <taxon>Magnoliopsida</taxon>
        <taxon>eudicotyledons</taxon>
        <taxon>Gunneridae</taxon>
        <taxon>Pentapetalae</taxon>
        <taxon>rosids</taxon>
        <taxon>fabids</taxon>
        <taxon>Fabales</taxon>
        <taxon>Fabaceae</taxon>
        <taxon>Papilionoideae</taxon>
        <taxon>50 kb inversion clade</taxon>
        <taxon>NPAAA clade</taxon>
        <taxon>indigoferoid/millettioid clade</taxon>
        <taxon>Abreae</taxon>
        <taxon>Abrus</taxon>
    </lineage>
</organism>
<reference evidence="8 9" key="1">
    <citation type="journal article" date="2000" name="J. Biol. Chem.">
        <title>Primary structure and function analysis of the Abrus precatorius agglutinin A chain by site-directed mutagenesis. Pro(199) Of amphiphilic alpha-helix H impairs protein synthesis inhibitory activity.</title>
        <authorList>
            <person name="Liu C.-L."/>
            <person name="Tsai C.-C."/>
            <person name="Lin S.-C."/>
            <person name="Wang L.-I."/>
            <person name="Hsu C.-I."/>
            <person name="Hwang M.-J."/>
            <person name="Lin J.-Y."/>
        </authorList>
    </citation>
    <scope>NUCLEOTIDE SEQUENCE [MRNA]</scope>
    <scope>PROTEIN SEQUENCE OF 21-278 AND 281-543</scope>
    <scope>FUNCTION</scope>
    <scope>MUTAGENESIS OF PRO-219</scope>
</reference>
<reference evidence="8" key="2">
    <citation type="journal article" date="2005" name="Int. J. Biochem. Cell Biol.">
        <title>Immunomodulatory role of native and heat denatured agglutinin from Abrus precatorius.</title>
        <authorList>
            <person name="Tripathi S."/>
            <person name="Maiti T.K."/>
        </authorList>
    </citation>
    <scope>IMMUNOMODULATORY ROLE</scope>
</reference>
<reference evidence="8" key="3">
    <citation type="journal article" date="2006" name="J. Biol. Chem.">
        <title>Structure-function analysis and insights into the reduced toxicity of Abrus precatorius agglutinin I in relation to abrin.</title>
        <authorList>
            <person name="Bagaria A."/>
            <person name="Surendranath K."/>
            <person name="Ramagopal U.A."/>
            <person name="Ramakumar S."/>
            <person name="Karande A.A."/>
        </authorList>
    </citation>
    <scope>SUBUNIT</scope>
    <scope>3D-STRUCTURE MODELING</scope>
</reference>
<evidence type="ECO:0000250" key="1">
    <source>
        <dbReference type="UniProtKB" id="P11140"/>
    </source>
</evidence>
<evidence type="ECO:0000250" key="2">
    <source>
        <dbReference type="UniProtKB" id="P28590"/>
    </source>
</evidence>
<evidence type="ECO:0000255" key="3"/>
<evidence type="ECO:0000255" key="4">
    <source>
        <dbReference type="PROSITE-ProRule" id="PRU00174"/>
    </source>
</evidence>
<evidence type="ECO:0000269" key="5">
    <source>
    </source>
</evidence>
<evidence type="ECO:0000269" key="6">
    <source>
    </source>
</evidence>
<evidence type="ECO:0000269" key="7">
    <source>
    </source>
</evidence>
<evidence type="ECO:0000305" key="8"/>
<evidence type="ECO:0000312" key="9">
    <source>
        <dbReference type="EMBL" id="AAF28309.1"/>
    </source>
</evidence>
<evidence type="ECO:0007829" key="10">
    <source>
        <dbReference type="PDB" id="2Q3N"/>
    </source>
</evidence>
<evidence type="ECO:0007829" key="11">
    <source>
        <dbReference type="PDB" id="2ZR1"/>
    </source>
</evidence>
<accession>Q9M6E9</accession>
<keyword id="KW-0002">3D-structure</keyword>
<keyword id="KW-0903">Direct protein sequencing</keyword>
<keyword id="KW-1015">Disulfide bond</keyword>
<keyword id="KW-0325">Glycoprotein</keyword>
<keyword id="KW-0378">Hydrolase</keyword>
<keyword id="KW-0430">Lectin</keyword>
<keyword id="KW-0611">Plant defense</keyword>
<keyword id="KW-0652">Protein synthesis inhibitor</keyword>
<keyword id="KW-0873">Pyrrolidone carboxylic acid</keyword>
<keyword id="KW-1185">Reference proteome</keyword>
<keyword id="KW-0677">Repeat</keyword>
<keyword id="KW-0732">Signal</keyword>
<keyword id="KW-0800">Toxin</keyword>